<dbReference type="EC" id="5.1.1.10" evidence="1"/>
<dbReference type="EMBL" id="BA000032">
    <property type="protein sequence ID" value="BAC62344.1"/>
    <property type="molecule type" value="Genomic_DNA"/>
</dbReference>
<dbReference type="RefSeq" id="NP_800511.1">
    <property type="nucleotide sequence ID" value="NC_004605.1"/>
</dbReference>
<dbReference type="SMR" id="Q87HG4"/>
<dbReference type="GeneID" id="1191694"/>
<dbReference type="KEGG" id="vpa:VPA1001"/>
<dbReference type="PATRIC" id="fig|223926.6.peg.3932"/>
<dbReference type="eggNOG" id="COG0787">
    <property type="taxonomic scope" value="Bacteria"/>
</dbReference>
<dbReference type="HOGENOM" id="CLU_028393_2_2_6"/>
<dbReference type="Proteomes" id="UP000002493">
    <property type="component" value="Chromosome 2"/>
</dbReference>
<dbReference type="GO" id="GO:0005829">
    <property type="term" value="C:cytosol"/>
    <property type="evidence" value="ECO:0007669"/>
    <property type="project" value="TreeGrafter"/>
</dbReference>
<dbReference type="GO" id="GO:0042597">
    <property type="term" value="C:periplasmic space"/>
    <property type="evidence" value="ECO:0007669"/>
    <property type="project" value="UniProtKB-SubCell"/>
</dbReference>
<dbReference type="GO" id="GO:0008784">
    <property type="term" value="F:alanine racemase activity"/>
    <property type="evidence" value="ECO:0007669"/>
    <property type="project" value="InterPro"/>
</dbReference>
<dbReference type="GO" id="GO:0047679">
    <property type="term" value="F:arginine racemase activity"/>
    <property type="evidence" value="ECO:0007669"/>
    <property type="project" value="RHEA"/>
</dbReference>
<dbReference type="GO" id="GO:0018113">
    <property type="term" value="F:lysine racemase activity"/>
    <property type="evidence" value="ECO:0007669"/>
    <property type="project" value="RHEA"/>
</dbReference>
<dbReference type="GO" id="GO:0030170">
    <property type="term" value="F:pyridoxal phosphate binding"/>
    <property type="evidence" value="ECO:0007669"/>
    <property type="project" value="UniProtKB-UniRule"/>
</dbReference>
<dbReference type="CDD" id="cd06826">
    <property type="entry name" value="PLPDE_III_AR2"/>
    <property type="match status" value="1"/>
</dbReference>
<dbReference type="Gene3D" id="3.20.20.10">
    <property type="entry name" value="Alanine racemase"/>
    <property type="match status" value="1"/>
</dbReference>
<dbReference type="Gene3D" id="2.40.37.10">
    <property type="entry name" value="Lyase, Ornithine Decarboxylase, Chain A, domain 1"/>
    <property type="match status" value="1"/>
</dbReference>
<dbReference type="HAMAP" id="MF_02212">
    <property type="entry name" value="Bsr_racemase"/>
    <property type="match status" value="1"/>
</dbReference>
<dbReference type="InterPro" id="IPR000821">
    <property type="entry name" value="Ala_racemase"/>
</dbReference>
<dbReference type="InterPro" id="IPR009006">
    <property type="entry name" value="Ala_racemase/Decarboxylase_C"/>
</dbReference>
<dbReference type="InterPro" id="IPR011079">
    <property type="entry name" value="Ala_racemase_C"/>
</dbReference>
<dbReference type="InterPro" id="IPR001608">
    <property type="entry name" value="Ala_racemase_N"/>
</dbReference>
<dbReference type="InterPro" id="IPR020622">
    <property type="entry name" value="Ala_racemase_pyridoxalP-BS"/>
</dbReference>
<dbReference type="InterPro" id="IPR029066">
    <property type="entry name" value="PLP-binding_barrel"/>
</dbReference>
<dbReference type="InterPro" id="IPR043698">
    <property type="entry name" value="Racemase_Bsr/Lyr"/>
</dbReference>
<dbReference type="NCBIfam" id="TIGR00492">
    <property type="entry name" value="alr"/>
    <property type="match status" value="1"/>
</dbReference>
<dbReference type="NCBIfam" id="NF009879">
    <property type="entry name" value="PRK13340.1-4"/>
    <property type="match status" value="1"/>
</dbReference>
<dbReference type="PANTHER" id="PTHR30511">
    <property type="entry name" value="ALANINE RACEMASE"/>
    <property type="match status" value="1"/>
</dbReference>
<dbReference type="PANTHER" id="PTHR30511:SF0">
    <property type="entry name" value="ALANINE RACEMASE, CATABOLIC-RELATED"/>
    <property type="match status" value="1"/>
</dbReference>
<dbReference type="Pfam" id="PF00842">
    <property type="entry name" value="Ala_racemase_C"/>
    <property type="match status" value="1"/>
</dbReference>
<dbReference type="Pfam" id="PF01168">
    <property type="entry name" value="Ala_racemase_N"/>
    <property type="match status" value="1"/>
</dbReference>
<dbReference type="PRINTS" id="PR00992">
    <property type="entry name" value="ALARACEMASE"/>
</dbReference>
<dbReference type="SMART" id="SM01005">
    <property type="entry name" value="Ala_racemase_C"/>
    <property type="match status" value="1"/>
</dbReference>
<dbReference type="SUPFAM" id="SSF50621">
    <property type="entry name" value="Alanine racemase C-terminal domain-like"/>
    <property type="match status" value="1"/>
</dbReference>
<dbReference type="SUPFAM" id="SSF51419">
    <property type="entry name" value="PLP-binding barrel"/>
    <property type="match status" value="1"/>
</dbReference>
<dbReference type="PROSITE" id="PS00395">
    <property type="entry name" value="ALANINE_RACEMASE"/>
    <property type="match status" value="1"/>
</dbReference>
<sequence>MRLKKTLLSIAIAAATFTPAMHSIAAPLQLQATLDQESQIQSSNTWLEIDLGQFKQNIEQFKSHMNDQTKICAVMKADAYGNGIAGLMPTIIEQQIPCVAIASNAEAQVVRDSGFKGQLMRVRSAEIGEIEGALDLNVEELIGTLDQAKAIAALSKKANKTVKVHLALNDGGMGRNGIDMTTENGKKEALAIAKQSGVEIVGIMTHFPNYNAEEVRAKLGSFKESSAWLIKEANLKREDILLHVANSYTALNVPEAQLDMVRPGGVLYGDLPTNLEYPSIVSFKTRVASLHHLPKNSTVGYDSSFTTTKESVMANLPVGYSDGYPRKMGNTADVLINGQRAKVVGVTSMNTTMIDVSDIKGVKPGSEVVLFGNQKSQTINAAEIEKNADVIFPELYTIWGTSNPRVYVK</sequence>
<gene>
    <name type="ordered locus">VPA1001</name>
</gene>
<keyword id="KW-1015">Disulfide bond</keyword>
<keyword id="KW-0413">Isomerase</keyword>
<keyword id="KW-0574">Periplasm</keyword>
<keyword id="KW-0663">Pyridoxal phosphate</keyword>
<keyword id="KW-0732">Signal</keyword>
<comment type="function">
    <text evidence="1">Amino-acid racemase able to utilize a broad range of substrates.</text>
</comment>
<comment type="catalytic activity">
    <reaction evidence="1">
        <text>an L-alpha-amino acid = a D-alpha-amino acid</text>
        <dbReference type="Rhea" id="RHEA:18317"/>
        <dbReference type="ChEBI" id="CHEBI:59869"/>
        <dbReference type="ChEBI" id="CHEBI:59871"/>
        <dbReference type="EC" id="5.1.1.10"/>
    </reaction>
</comment>
<comment type="catalytic activity">
    <reaction evidence="1">
        <text>L-lysine = D-lysine</text>
        <dbReference type="Rhea" id="RHEA:22864"/>
        <dbReference type="ChEBI" id="CHEBI:32551"/>
        <dbReference type="ChEBI" id="CHEBI:32557"/>
    </reaction>
</comment>
<comment type="catalytic activity">
    <reaction evidence="1">
        <text>L-arginine = D-arginine</text>
        <dbReference type="Rhea" id="RHEA:18069"/>
        <dbReference type="ChEBI" id="CHEBI:32682"/>
        <dbReference type="ChEBI" id="CHEBI:32689"/>
    </reaction>
</comment>
<comment type="cofactor">
    <cofactor evidence="1">
        <name>pyridoxal 5'-phosphate</name>
        <dbReference type="ChEBI" id="CHEBI:597326"/>
    </cofactor>
</comment>
<comment type="subcellular location">
    <subcellularLocation>
        <location evidence="1">Periplasm</location>
    </subcellularLocation>
</comment>
<comment type="similarity">
    <text evidence="1">Belongs to the alanine racemase family. Bsr subfamily.</text>
</comment>
<proteinExistence type="inferred from homology"/>
<evidence type="ECO:0000255" key="1">
    <source>
        <dbReference type="HAMAP-Rule" id="MF_02212"/>
    </source>
</evidence>
<feature type="signal peptide" evidence="1">
    <location>
        <begin position="1"/>
        <end position="25"/>
    </location>
</feature>
<feature type="chain" id="PRO_0000114594" description="Broad specificity amino-acid racemase" evidence="1">
    <location>
        <begin position="26"/>
        <end position="409"/>
    </location>
</feature>
<feature type="active site" description="Proton acceptor" evidence="1">
    <location>
        <position position="76"/>
    </location>
</feature>
<feature type="active site" description="Proton acceptor" evidence="1">
    <location>
        <position position="301"/>
    </location>
</feature>
<feature type="binding site" evidence="1">
    <location>
        <position position="175"/>
    </location>
    <ligand>
        <name>substrate</name>
    </ligand>
</feature>
<feature type="binding site" evidence="1">
    <location>
        <position position="349"/>
    </location>
    <ligand>
        <name>substrate</name>
    </ligand>
</feature>
<feature type="modified residue" description="N6-(pyridoxal phosphate)lysine" evidence="1">
    <location>
        <position position="76"/>
    </location>
</feature>
<feature type="disulfide bond" evidence="1">
    <location>
        <begin position="72"/>
        <end position="98"/>
    </location>
</feature>
<protein>
    <recommendedName>
        <fullName evidence="1">Broad specificity amino-acid racemase</fullName>
        <ecNumber evidence="1">5.1.1.10</ecNumber>
    </recommendedName>
</protein>
<reference key="1">
    <citation type="journal article" date="2003" name="Lancet">
        <title>Genome sequence of Vibrio parahaemolyticus: a pathogenic mechanism distinct from that of V. cholerae.</title>
        <authorList>
            <person name="Makino K."/>
            <person name="Oshima K."/>
            <person name="Kurokawa K."/>
            <person name="Yokoyama K."/>
            <person name="Uda T."/>
            <person name="Tagomori K."/>
            <person name="Iijima Y."/>
            <person name="Najima M."/>
            <person name="Nakano M."/>
            <person name="Yamashita A."/>
            <person name="Kubota Y."/>
            <person name="Kimura S."/>
            <person name="Yasunaga T."/>
            <person name="Honda T."/>
            <person name="Shinagawa H."/>
            <person name="Hattori M."/>
            <person name="Iida T."/>
        </authorList>
    </citation>
    <scope>NUCLEOTIDE SEQUENCE [LARGE SCALE GENOMIC DNA]</scope>
    <source>
        <strain>RIMD 2210633</strain>
    </source>
</reference>
<accession>Q87HG4</accession>
<organism>
    <name type="scientific">Vibrio parahaemolyticus serotype O3:K6 (strain RIMD 2210633)</name>
    <dbReference type="NCBI Taxonomy" id="223926"/>
    <lineage>
        <taxon>Bacteria</taxon>
        <taxon>Pseudomonadati</taxon>
        <taxon>Pseudomonadota</taxon>
        <taxon>Gammaproteobacteria</taxon>
        <taxon>Vibrionales</taxon>
        <taxon>Vibrionaceae</taxon>
        <taxon>Vibrio</taxon>
    </lineage>
</organism>
<name>BSR_VIBPA</name>